<gene>
    <name type="ordered locus">MJ1514</name>
</gene>
<evidence type="ECO:0000250" key="1"/>
<evidence type="ECO:0000305" key="2"/>
<keyword id="KW-0012">Acyltransferase</keyword>
<keyword id="KW-1185">Reference proteome</keyword>
<keyword id="KW-0808">Transferase</keyword>
<feature type="chain" id="PRO_0000184794" description="Putative gamma-glutamylcyclotransferase MJ1514">
    <location>
        <begin position="1"/>
        <end position="120"/>
    </location>
</feature>
<feature type="active site" description="Proton acceptor" evidence="1">
    <location>
        <position position="74"/>
    </location>
</feature>
<feature type="binding site" evidence="1">
    <location>
        <begin position="7"/>
        <end position="10"/>
    </location>
    <ligand>
        <name>substrate</name>
    </ligand>
</feature>
<reference key="1">
    <citation type="journal article" date="1996" name="Science">
        <title>Complete genome sequence of the methanogenic archaeon, Methanococcus jannaschii.</title>
        <authorList>
            <person name="Bult C.J."/>
            <person name="White O."/>
            <person name="Olsen G.J."/>
            <person name="Zhou L."/>
            <person name="Fleischmann R.D."/>
            <person name="Sutton G.G."/>
            <person name="Blake J.A."/>
            <person name="FitzGerald L.M."/>
            <person name="Clayton R.A."/>
            <person name="Gocayne J.D."/>
            <person name="Kerlavage A.R."/>
            <person name="Dougherty B.A."/>
            <person name="Tomb J.-F."/>
            <person name="Adams M.D."/>
            <person name="Reich C.I."/>
            <person name="Overbeek R."/>
            <person name="Kirkness E.F."/>
            <person name="Weinstock K.G."/>
            <person name="Merrick J.M."/>
            <person name="Glodek A."/>
            <person name="Scott J.L."/>
            <person name="Geoghagen N.S.M."/>
            <person name="Weidman J.F."/>
            <person name="Fuhrmann J.L."/>
            <person name="Nguyen D."/>
            <person name="Utterback T.R."/>
            <person name="Kelley J.M."/>
            <person name="Peterson J.D."/>
            <person name="Sadow P.W."/>
            <person name="Hanna M.C."/>
            <person name="Cotton M.D."/>
            <person name="Roberts K.M."/>
            <person name="Hurst M.A."/>
            <person name="Kaine B.P."/>
            <person name="Borodovsky M."/>
            <person name="Klenk H.-P."/>
            <person name="Fraser C.M."/>
            <person name="Smith H.O."/>
            <person name="Woese C.R."/>
            <person name="Venter J.C."/>
        </authorList>
    </citation>
    <scope>NUCLEOTIDE SEQUENCE [LARGE SCALE GENOMIC DNA]</scope>
    <source>
        <strain>ATCC 43067 / DSM 2661 / JAL-1 / JCM 10045 / NBRC 100440</strain>
    </source>
</reference>
<accession>Q58909</accession>
<proteinExistence type="inferred from homology"/>
<dbReference type="EC" id="2.3.2.-"/>
<dbReference type="EMBL" id="L77117">
    <property type="protein sequence ID" value="AAB99532.1"/>
    <property type="molecule type" value="Genomic_DNA"/>
</dbReference>
<dbReference type="PIR" id="A64489">
    <property type="entry name" value="A64489"/>
</dbReference>
<dbReference type="RefSeq" id="WP_010871037.1">
    <property type="nucleotide sequence ID" value="NC_000909.1"/>
</dbReference>
<dbReference type="SMR" id="Q58909"/>
<dbReference type="FunCoup" id="Q58909">
    <property type="interactions" value="12"/>
</dbReference>
<dbReference type="STRING" id="243232.MJ_1514"/>
<dbReference type="PaxDb" id="243232-MJ_1514"/>
<dbReference type="EnsemblBacteria" id="AAB99532">
    <property type="protein sequence ID" value="AAB99532"/>
    <property type="gene ID" value="MJ_1514"/>
</dbReference>
<dbReference type="GeneID" id="1452421"/>
<dbReference type="KEGG" id="mja:MJ_1514"/>
<dbReference type="eggNOG" id="arCOG03271">
    <property type="taxonomic scope" value="Archaea"/>
</dbReference>
<dbReference type="HOGENOM" id="CLU_083466_5_1_2"/>
<dbReference type="InParanoid" id="Q58909"/>
<dbReference type="OrthoDB" id="100169at2157"/>
<dbReference type="PhylomeDB" id="Q58909"/>
<dbReference type="Proteomes" id="UP000000805">
    <property type="component" value="Chromosome"/>
</dbReference>
<dbReference type="GO" id="GO:0005829">
    <property type="term" value="C:cytosol"/>
    <property type="evidence" value="ECO:0000318"/>
    <property type="project" value="GO_Central"/>
</dbReference>
<dbReference type="GO" id="GO:0016746">
    <property type="term" value="F:acyltransferase activity"/>
    <property type="evidence" value="ECO:0007669"/>
    <property type="project" value="UniProtKB-KW"/>
</dbReference>
<dbReference type="GO" id="GO:0061929">
    <property type="term" value="F:gamma-glutamylaminecyclotransferase activity"/>
    <property type="evidence" value="ECO:0007669"/>
    <property type="project" value="InterPro"/>
</dbReference>
<dbReference type="CDD" id="cd06661">
    <property type="entry name" value="GGCT_like"/>
    <property type="match status" value="1"/>
</dbReference>
<dbReference type="Gene3D" id="3.10.490.10">
    <property type="entry name" value="Gamma-glutamyl cyclotransferase-like"/>
    <property type="match status" value="1"/>
</dbReference>
<dbReference type="InterPro" id="IPR009288">
    <property type="entry name" value="AIG2-like_dom"/>
</dbReference>
<dbReference type="InterPro" id="IPR039126">
    <property type="entry name" value="GGACT"/>
</dbReference>
<dbReference type="InterPro" id="IPR013024">
    <property type="entry name" value="GGCT-like"/>
</dbReference>
<dbReference type="InterPro" id="IPR036568">
    <property type="entry name" value="GGCT-like_sf"/>
</dbReference>
<dbReference type="PANTHER" id="PTHR12510:SF4">
    <property type="entry name" value="GAMMA-GLUTAMYLAMINECYCLOTRANSFERASE"/>
    <property type="match status" value="1"/>
</dbReference>
<dbReference type="PANTHER" id="PTHR12510">
    <property type="entry name" value="TROPONIN C-AKIN-1 PROTEIN"/>
    <property type="match status" value="1"/>
</dbReference>
<dbReference type="Pfam" id="PF06094">
    <property type="entry name" value="GGACT"/>
    <property type="match status" value="1"/>
</dbReference>
<dbReference type="SUPFAM" id="SSF110857">
    <property type="entry name" value="Gamma-glutamyl cyclotransferase-like"/>
    <property type="match status" value="1"/>
</dbReference>
<protein>
    <recommendedName>
        <fullName>Putative gamma-glutamylcyclotransferase MJ1514</fullName>
        <ecNumber>2.3.2.-</ecNumber>
    </recommendedName>
</protein>
<organism>
    <name type="scientific">Methanocaldococcus jannaschii (strain ATCC 43067 / DSM 2661 / JAL-1 / JCM 10045 / NBRC 100440)</name>
    <name type="common">Methanococcus jannaschii</name>
    <dbReference type="NCBI Taxonomy" id="243232"/>
    <lineage>
        <taxon>Archaea</taxon>
        <taxon>Methanobacteriati</taxon>
        <taxon>Methanobacteriota</taxon>
        <taxon>Methanomada group</taxon>
        <taxon>Methanococci</taxon>
        <taxon>Methanococcales</taxon>
        <taxon>Methanocaldococcaceae</taxon>
        <taxon>Methanocaldococcus</taxon>
    </lineage>
</organism>
<name>Y1514_METJA</name>
<sequence length="120" mass="14209">MEYVFVYGSLRKGFWNHEPYLKNSKFIGKGKTKEKYAMYVNIIPYVVENEKISHIVGEVYEVDEKTLKRIDCLEGHPDYYRRKKVSIILDSGKEIEAWLYFYPESCGILVESGDYKDYRG</sequence>
<comment type="function">
    <text evidence="1">Putative gamma-glutamylcyclotransferase.</text>
</comment>
<comment type="similarity">
    <text evidence="2">Belongs to the gamma-glutamylcyclotransferase family.</text>
</comment>